<protein>
    <recommendedName>
        <fullName evidence="1">Putative cysteine ligase BshC</fullName>
        <ecNumber evidence="1">6.-.-.-</ecNumber>
    </recommendedName>
</protein>
<keyword id="KW-0175">Coiled coil</keyword>
<keyword id="KW-0436">Ligase</keyword>
<keyword id="KW-1185">Reference proteome</keyword>
<dbReference type="EC" id="6.-.-.-" evidence="1"/>
<dbReference type="EMBL" id="AP006840">
    <property type="protein sequence ID" value="BAD41574.1"/>
    <property type="status" value="ALT_INIT"/>
    <property type="molecule type" value="Genomic_DNA"/>
</dbReference>
<dbReference type="RefSeq" id="WP_043714106.1">
    <property type="nucleotide sequence ID" value="NC_006177.1"/>
</dbReference>
<dbReference type="SMR" id="Q67L72"/>
<dbReference type="STRING" id="292459.STH2589"/>
<dbReference type="KEGG" id="sth:STH2589"/>
<dbReference type="eggNOG" id="COG4365">
    <property type="taxonomic scope" value="Bacteria"/>
</dbReference>
<dbReference type="HOGENOM" id="CLU_022249_1_0_9"/>
<dbReference type="OrthoDB" id="9765151at2"/>
<dbReference type="Proteomes" id="UP000000417">
    <property type="component" value="Chromosome"/>
</dbReference>
<dbReference type="GO" id="GO:0016874">
    <property type="term" value="F:ligase activity"/>
    <property type="evidence" value="ECO:0007669"/>
    <property type="project" value="UniProtKB-UniRule"/>
</dbReference>
<dbReference type="HAMAP" id="MF_01867">
    <property type="entry name" value="BshC"/>
    <property type="match status" value="1"/>
</dbReference>
<dbReference type="InterPro" id="IPR011199">
    <property type="entry name" value="Bacillithiol_biosynth_BshC"/>
</dbReference>
<dbReference type="InterPro" id="IPR055399">
    <property type="entry name" value="CC_BshC"/>
</dbReference>
<dbReference type="InterPro" id="IPR055398">
    <property type="entry name" value="Rossmann-like_BshC"/>
</dbReference>
<dbReference type="NCBIfam" id="TIGR03998">
    <property type="entry name" value="thiol_BshC"/>
    <property type="match status" value="1"/>
</dbReference>
<dbReference type="Pfam" id="PF24850">
    <property type="entry name" value="CC_BshC"/>
    <property type="match status" value="1"/>
</dbReference>
<dbReference type="Pfam" id="PF10079">
    <property type="entry name" value="Rossmann-like_BshC"/>
    <property type="match status" value="1"/>
</dbReference>
<dbReference type="PIRSF" id="PIRSF012535">
    <property type="entry name" value="UCP012535"/>
    <property type="match status" value="1"/>
</dbReference>
<organism>
    <name type="scientific">Symbiobacterium thermophilum (strain DSM 24528 / JCM 14929 / IAM 14863 / T)</name>
    <dbReference type="NCBI Taxonomy" id="292459"/>
    <lineage>
        <taxon>Bacteria</taxon>
        <taxon>Bacillati</taxon>
        <taxon>Bacillota</taxon>
        <taxon>Clostridia</taxon>
        <taxon>Eubacteriales</taxon>
        <taxon>Symbiobacteriaceae</taxon>
        <taxon>Symbiobacterium</taxon>
    </lineage>
</organism>
<evidence type="ECO:0000255" key="1">
    <source>
        <dbReference type="HAMAP-Rule" id="MF_01867"/>
    </source>
</evidence>
<evidence type="ECO:0000305" key="2"/>
<comment type="function">
    <text evidence="1">Involved in bacillithiol (BSH) biosynthesis. May catalyze the last step of the pathway, the addition of cysteine to glucosamine malate (GlcN-Mal) to generate BSH.</text>
</comment>
<comment type="similarity">
    <text evidence="1">Belongs to the BshC family.</text>
</comment>
<comment type="sequence caution" evidence="2">
    <conflict type="erroneous initiation">
        <sequence resource="EMBL-CDS" id="BAD41574"/>
    </conflict>
</comment>
<feature type="chain" id="PRO_0000378271" description="Putative cysteine ligase BshC">
    <location>
        <begin position="1"/>
        <end position="556"/>
    </location>
</feature>
<feature type="coiled-coil region" evidence="1">
    <location>
        <begin position="408"/>
        <end position="442"/>
    </location>
</feature>
<feature type="coiled-coil region" evidence="1">
    <location>
        <begin position="468"/>
        <end position="513"/>
    </location>
</feature>
<sequence>MHIERVPGIALSPSGAVAAYLGDWARVAPAYEYDWRRQESFERRAAYLTGGGYAGDRAAVAAALERYNRALGADEASLENARLLGRPETLAAVTGQQAGILTGPAYSIYKAMTTIRLARQQSQRLGVPVVPVFWIAGEDHDWHEVSWVMVPAGNETRRLALSERFDGERRSVALAPMPASVSDLIDEFAQLMPDTEFKEEVIAHLREAAVGGPALDPEATGGAPSLADWFGRLMAWVFRGTGLVFLNSSDPALRRIEAPFFARALQQQAEVEAACAAGVDRWERELGFACTVEQTPNSLNLFIYIDGERLPLLGEGDRVWVRGRPDLSWSRSELVDLALRSPERFSTNVVLRPVVQSYLLPDLFYVGGPGEISYFGLLRDVYRAMGRQMPVVVPREGFTLVEPPIARILQKHELTLDDAFHRLDDLRQELLEREDRLGIAQAFASFRQDFERRHAELAALVLQLDPGLGQVVEENRRQIEHQINRLEEKAKQQHRKNCETALRQFDRLKANLTPNGLQERAFSILPYLVKYGPDLVRRLVDEVPLEEGWSHRAIYL</sequence>
<reference key="1">
    <citation type="journal article" date="2004" name="Nucleic Acids Res.">
        <title>Genome sequence of Symbiobacterium thermophilum, an uncultivable bacterium that depends on microbial commensalism.</title>
        <authorList>
            <person name="Ueda K."/>
            <person name="Yamashita A."/>
            <person name="Ishikawa J."/>
            <person name="Shimada M."/>
            <person name="Watsuji T."/>
            <person name="Morimura K."/>
            <person name="Ikeda H."/>
            <person name="Hattori M."/>
            <person name="Beppu T."/>
        </authorList>
    </citation>
    <scope>NUCLEOTIDE SEQUENCE [LARGE SCALE GENOMIC DNA]</scope>
    <source>
        <strain>DSM 24528 / JCM 14929 / IAM 14863 / T</strain>
    </source>
</reference>
<gene>
    <name evidence="1" type="primary">bshC</name>
    <name type="ordered locus">STH2589</name>
</gene>
<name>BSHC_SYMTH</name>
<proteinExistence type="inferred from homology"/>
<accession>Q67L72</accession>